<dbReference type="EC" id="6.3.1.20" evidence="1"/>
<dbReference type="EMBL" id="AM933173">
    <property type="protein sequence ID" value="CAR40160.1"/>
    <property type="molecule type" value="Genomic_DNA"/>
</dbReference>
<dbReference type="RefSeq" id="WP_000209763.1">
    <property type="nucleotide sequence ID" value="NC_011274.1"/>
</dbReference>
<dbReference type="SMR" id="B5R9V4"/>
<dbReference type="KEGG" id="seg:SG4398"/>
<dbReference type="HOGENOM" id="CLU_022986_0_1_6"/>
<dbReference type="UniPathway" id="UPA00537">
    <property type="reaction ID" value="UER00594"/>
</dbReference>
<dbReference type="UniPathway" id="UPA00537">
    <property type="reaction ID" value="UER00595"/>
</dbReference>
<dbReference type="Proteomes" id="UP000008321">
    <property type="component" value="Chromosome"/>
</dbReference>
<dbReference type="GO" id="GO:0005829">
    <property type="term" value="C:cytosol"/>
    <property type="evidence" value="ECO:0007669"/>
    <property type="project" value="TreeGrafter"/>
</dbReference>
<dbReference type="GO" id="GO:0005524">
    <property type="term" value="F:ATP binding"/>
    <property type="evidence" value="ECO:0007669"/>
    <property type="project" value="UniProtKB-KW"/>
</dbReference>
<dbReference type="GO" id="GO:0016979">
    <property type="term" value="F:lipoate-protein ligase activity"/>
    <property type="evidence" value="ECO:0007669"/>
    <property type="project" value="UniProtKB-UniRule"/>
</dbReference>
<dbReference type="GO" id="GO:0017118">
    <property type="term" value="F:lipoyltransferase activity"/>
    <property type="evidence" value="ECO:0007669"/>
    <property type="project" value="TreeGrafter"/>
</dbReference>
<dbReference type="GO" id="GO:0036211">
    <property type="term" value="P:protein modification process"/>
    <property type="evidence" value="ECO:0007669"/>
    <property type="project" value="InterPro"/>
</dbReference>
<dbReference type="CDD" id="cd16443">
    <property type="entry name" value="LplA"/>
    <property type="match status" value="1"/>
</dbReference>
<dbReference type="FunFam" id="3.30.930.10:FF:000024">
    <property type="entry name" value="Lipoate-protein ligase A"/>
    <property type="match status" value="1"/>
</dbReference>
<dbReference type="Gene3D" id="3.30.930.10">
    <property type="entry name" value="Bira Bifunctional Protein, Domain 2"/>
    <property type="match status" value="1"/>
</dbReference>
<dbReference type="Gene3D" id="3.30.390.50">
    <property type="entry name" value="CO dehydrogenase flavoprotein, C-terminal domain"/>
    <property type="match status" value="1"/>
</dbReference>
<dbReference type="HAMAP" id="MF_01602">
    <property type="entry name" value="LplA"/>
    <property type="match status" value="1"/>
</dbReference>
<dbReference type="InterPro" id="IPR045864">
    <property type="entry name" value="aa-tRNA-synth_II/BPL/LPL"/>
</dbReference>
<dbReference type="InterPro" id="IPR004143">
    <property type="entry name" value="BPL_LPL_catalytic"/>
</dbReference>
<dbReference type="InterPro" id="IPR023741">
    <property type="entry name" value="Lipoate_ligase_A"/>
</dbReference>
<dbReference type="InterPro" id="IPR019491">
    <property type="entry name" value="Lipoate_protein_ligase_C"/>
</dbReference>
<dbReference type="InterPro" id="IPR004562">
    <property type="entry name" value="LipoylTrfase_LipoateP_Ligase"/>
</dbReference>
<dbReference type="NCBIfam" id="TIGR00545">
    <property type="entry name" value="lipoyltrans"/>
    <property type="match status" value="1"/>
</dbReference>
<dbReference type="PANTHER" id="PTHR12561">
    <property type="entry name" value="LIPOATE-PROTEIN LIGASE"/>
    <property type="match status" value="1"/>
</dbReference>
<dbReference type="PANTHER" id="PTHR12561:SF3">
    <property type="entry name" value="LIPOYLTRANSFERASE 1, MITOCHONDRIAL"/>
    <property type="match status" value="1"/>
</dbReference>
<dbReference type="Pfam" id="PF10437">
    <property type="entry name" value="Lip_prot_lig_C"/>
    <property type="match status" value="1"/>
</dbReference>
<dbReference type="Pfam" id="PF21948">
    <property type="entry name" value="LplA-B_cat"/>
    <property type="match status" value="1"/>
</dbReference>
<dbReference type="SUPFAM" id="SSF55681">
    <property type="entry name" value="Class II aaRS and biotin synthetases"/>
    <property type="match status" value="1"/>
</dbReference>
<dbReference type="SUPFAM" id="SSF82649">
    <property type="entry name" value="SufE/NifU"/>
    <property type="match status" value="1"/>
</dbReference>
<dbReference type="PROSITE" id="PS51733">
    <property type="entry name" value="BPL_LPL_CATALYTIC"/>
    <property type="match status" value="1"/>
</dbReference>
<sequence>MTTLRLLISDSYDPWFNLAVEECIFRQMPATQRVLFLWRNADTVVIGRAQNPWKECNTRRMEEDNVRLARRSSGGGAVFHDLGNTCFTFMAGKPEYDKTISTHIVLAALNSLGVMADASGRNDLVVKTPDGDRKVSGSAYRETKDRGFHHGTLLLNADLSRLANYLNPDKKKLAAKGITSVRSRVANLTELLPGITHEQVCQAVTEAFFAHYGERVDAEVISPDKTPDLPNFAETFARQSSWEWNFGQAPAFSHLLDERFTWGGVELHFDVEKGVITRAQVFTDSLNPAPLEALGERLQGCQYRVDVLEQACESLIAEFPAQKGELRELAAWMAQAVR</sequence>
<gene>
    <name evidence="1" type="primary">lplA</name>
    <name type="ordered locus">SG4398</name>
</gene>
<protein>
    <recommendedName>
        <fullName evidence="1">Lipoate-protein ligase A</fullName>
        <ecNumber evidence="1">6.3.1.20</ecNumber>
    </recommendedName>
    <alternativeName>
        <fullName evidence="1">Lipoate--protein ligase</fullName>
    </alternativeName>
</protein>
<comment type="function">
    <text evidence="1">Catalyzes both the ATP-dependent activation of exogenously supplied lipoate to lipoyl-AMP and the transfer of the activated lipoyl onto the lipoyl domains of lipoate-dependent enzymes.</text>
</comment>
<comment type="catalytic activity">
    <reaction evidence="1">
        <text>L-lysyl-[lipoyl-carrier protein] + (R)-lipoate + ATP = N(6)-[(R)-lipoyl]-L-lysyl-[lipoyl-carrier protein] + AMP + diphosphate + H(+)</text>
        <dbReference type="Rhea" id="RHEA:49288"/>
        <dbReference type="Rhea" id="RHEA-COMP:10500"/>
        <dbReference type="Rhea" id="RHEA-COMP:10502"/>
        <dbReference type="ChEBI" id="CHEBI:15378"/>
        <dbReference type="ChEBI" id="CHEBI:29969"/>
        <dbReference type="ChEBI" id="CHEBI:30616"/>
        <dbReference type="ChEBI" id="CHEBI:33019"/>
        <dbReference type="ChEBI" id="CHEBI:83088"/>
        <dbReference type="ChEBI" id="CHEBI:83099"/>
        <dbReference type="ChEBI" id="CHEBI:456215"/>
        <dbReference type="EC" id="6.3.1.20"/>
    </reaction>
</comment>
<comment type="pathway">
    <text evidence="1">Protein modification; protein lipoylation via exogenous pathway; protein N(6)-(lipoyl)lysine from lipoate: step 1/2.</text>
</comment>
<comment type="pathway">
    <text evidence="1">Protein modification; protein lipoylation via exogenous pathway; protein N(6)-(lipoyl)lysine from lipoate: step 2/2.</text>
</comment>
<comment type="subunit">
    <text evidence="1">Monomer.</text>
</comment>
<comment type="subcellular location">
    <subcellularLocation>
        <location evidence="1">Cytoplasm</location>
    </subcellularLocation>
</comment>
<comment type="miscellaneous">
    <text evidence="1">In the transfer reaction, the free carboxyl group of lipoic acid is attached via an amide linkage to the epsilon-amino group of a specific lysine residue of lipoyl domains of lipoate-dependent enzymes.</text>
</comment>
<comment type="similarity">
    <text evidence="1">Belongs to the LplA family.</text>
</comment>
<name>LPLA_SALG2</name>
<keyword id="KW-0067">ATP-binding</keyword>
<keyword id="KW-0963">Cytoplasm</keyword>
<keyword id="KW-0436">Ligase</keyword>
<keyword id="KW-0547">Nucleotide-binding</keyword>
<organism>
    <name type="scientific">Salmonella gallinarum (strain 287/91 / NCTC 13346)</name>
    <dbReference type="NCBI Taxonomy" id="550538"/>
    <lineage>
        <taxon>Bacteria</taxon>
        <taxon>Pseudomonadati</taxon>
        <taxon>Pseudomonadota</taxon>
        <taxon>Gammaproteobacteria</taxon>
        <taxon>Enterobacterales</taxon>
        <taxon>Enterobacteriaceae</taxon>
        <taxon>Salmonella</taxon>
    </lineage>
</organism>
<evidence type="ECO:0000255" key="1">
    <source>
        <dbReference type="HAMAP-Rule" id="MF_01602"/>
    </source>
</evidence>
<evidence type="ECO:0000255" key="2">
    <source>
        <dbReference type="PROSITE-ProRule" id="PRU01067"/>
    </source>
</evidence>
<proteinExistence type="inferred from homology"/>
<accession>B5R9V4</accession>
<reference key="1">
    <citation type="journal article" date="2008" name="Genome Res.">
        <title>Comparative genome analysis of Salmonella enteritidis PT4 and Salmonella gallinarum 287/91 provides insights into evolutionary and host adaptation pathways.</title>
        <authorList>
            <person name="Thomson N.R."/>
            <person name="Clayton D.J."/>
            <person name="Windhorst D."/>
            <person name="Vernikos G."/>
            <person name="Davidson S."/>
            <person name="Churcher C."/>
            <person name="Quail M.A."/>
            <person name="Stevens M."/>
            <person name="Jones M.A."/>
            <person name="Watson M."/>
            <person name="Barron A."/>
            <person name="Layton A."/>
            <person name="Pickard D."/>
            <person name="Kingsley R.A."/>
            <person name="Bignell A."/>
            <person name="Clark L."/>
            <person name="Harris B."/>
            <person name="Ormond D."/>
            <person name="Abdellah Z."/>
            <person name="Brooks K."/>
            <person name="Cherevach I."/>
            <person name="Chillingworth T."/>
            <person name="Woodward J."/>
            <person name="Norberczak H."/>
            <person name="Lord A."/>
            <person name="Arrowsmith C."/>
            <person name="Jagels K."/>
            <person name="Moule S."/>
            <person name="Mungall K."/>
            <person name="Saunders M."/>
            <person name="Whitehead S."/>
            <person name="Chabalgoity J.A."/>
            <person name="Maskell D."/>
            <person name="Humphreys T."/>
            <person name="Roberts M."/>
            <person name="Barrow P.A."/>
            <person name="Dougan G."/>
            <person name="Parkhill J."/>
        </authorList>
    </citation>
    <scope>NUCLEOTIDE SEQUENCE [LARGE SCALE GENOMIC DNA]</scope>
    <source>
        <strain>287/91 / NCTC 13346</strain>
    </source>
</reference>
<feature type="chain" id="PRO_1000148113" description="Lipoate-protein ligase A">
    <location>
        <begin position="1"/>
        <end position="338"/>
    </location>
</feature>
<feature type="domain" description="BPL/LPL catalytic" evidence="2">
    <location>
        <begin position="29"/>
        <end position="216"/>
    </location>
</feature>
<feature type="binding site" evidence="1">
    <location>
        <position position="71"/>
    </location>
    <ligand>
        <name>ATP</name>
        <dbReference type="ChEBI" id="CHEBI:30616"/>
    </ligand>
</feature>
<feature type="binding site" evidence="1">
    <location>
        <begin position="76"/>
        <end position="79"/>
    </location>
    <ligand>
        <name>ATP</name>
        <dbReference type="ChEBI" id="CHEBI:30616"/>
    </ligand>
</feature>
<feature type="binding site" evidence="1">
    <location>
        <position position="134"/>
    </location>
    <ligand>
        <name>(R)-lipoate</name>
        <dbReference type="ChEBI" id="CHEBI:83088"/>
    </ligand>
</feature>
<feature type="binding site" evidence="1">
    <location>
        <position position="134"/>
    </location>
    <ligand>
        <name>ATP</name>
        <dbReference type="ChEBI" id="CHEBI:30616"/>
    </ligand>
</feature>